<keyword id="KW-1035">Host cytoplasm</keyword>
<keyword id="KW-1040">Host Golgi apparatus</keyword>
<keyword id="KW-1048">Host nucleus</keyword>
<keyword id="KW-0426">Late protein</keyword>
<keyword id="KW-0946">Virion</keyword>
<comment type="function">
    <text evidence="1">May participate in nuclear egress of viral particles. Plays a role in the dispersal of several host nucleolar proteins including NCL/nucleolin and NPM1. Since deletion of host NCL/nucleolin negatively impact on nuclear egress, UL24 supposedly acts on this process through its effect on host nucleoli (By similarity).</text>
</comment>
<comment type="subcellular location">
    <subcellularLocation>
        <location evidence="1">Virion</location>
    </subcellularLocation>
    <subcellularLocation>
        <location evidence="1">Host cytoplasm</location>
    </subcellularLocation>
    <subcellularLocation>
        <location evidence="1">Host nucleus</location>
        <location evidence="1">Host nucleolus</location>
    </subcellularLocation>
    <subcellularLocation>
        <location evidence="1">Host Golgi apparatus</location>
    </subcellularLocation>
</comment>
<comment type="induction">
    <text>Expressed late in the infection cycle.</text>
</comment>
<comment type="similarity">
    <text evidence="2">Belongs to the herpesviridae UL24 family.</text>
</comment>
<evidence type="ECO:0000250" key="1"/>
<evidence type="ECO:0000305" key="2"/>
<accession>Q4JQU0</accession>
<organismHost>
    <name type="scientific">Homo sapiens</name>
    <name type="common">Human</name>
    <dbReference type="NCBI Taxonomy" id="9606"/>
</organismHost>
<name>UL24_VZVO</name>
<sequence length="258" mass="28943">MSASRIRAKCFRLGQRCHTRFYDVLKKDIDNVRRGFADAFNPRLAKLLSPLSHVDVQRAVRISMSFEVNLGRRRPDCVCIIQTESSGAGKTVCFIVELKSCRFSANIHTPTKYHQFCEGMRQLRDTVALIKETTPTGSDEIMVTPLLVFVSQRGLNLLQVTRLPPKVIHGNLVMLASHLENVAEYTPPIRSVRERRRLCKKKIHVCSLAKKRAKSCHRSALTKFEENAACGVDLPLRRPSLGACGGILQSITGMFSHG</sequence>
<dbReference type="EMBL" id="AB097932">
    <property type="status" value="NOT_ANNOTATED_CDS"/>
    <property type="molecule type" value="Genomic_DNA"/>
</dbReference>
<dbReference type="EMBL" id="AB097933">
    <property type="status" value="NOT_ANNOTATED_CDS"/>
    <property type="molecule type" value="Genomic_DNA"/>
</dbReference>
<dbReference type="EMBL" id="DQ008354">
    <property type="protein sequence ID" value="AAY57647.1"/>
    <property type="molecule type" value="Genomic_DNA"/>
</dbReference>
<dbReference type="EMBL" id="DQ008355">
    <property type="protein sequence ID" value="AAY57718.1"/>
    <property type="molecule type" value="Genomic_DNA"/>
</dbReference>
<dbReference type="IntAct" id="Q4JQU0">
    <property type="interactions" value="3"/>
</dbReference>
<dbReference type="Proteomes" id="UP000002603">
    <property type="component" value="Genome"/>
</dbReference>
<dbReference type="Proteomes" id="UP000008504">
    <property type="component" value="Genome"/>
</dbReference>
<dbReference type="Proteomes" id="UP000008505">
    <property type="component" value="Genome"/>
</dbReference>
<dbReference type="Proteomes" id="UP000008506">
    <property type="component" value="Genome"/>
</dbReference>
<dbReference type="GO" id="GO:0044177">
    <property type="term" value="C:host cell Golgi apparatus"/>
    <property type="evidence" value="ECO:0007669"/>
    <property type="project" value="UniProtKB-SubCell"/>
</dbReference>
<dbReference type="GO" id="GO:0044196">
    <property type="term" value="C:host cell nucleolus"/>
    <property type="evidence" value="ECO:0007669"/>
    <property type="project" value="UniProtKB-SubCell"/>
</dbReference>
<dbReference type="GO" id="GO:0044423">
    <property type="term" value="C:virion component"/>
    <property type="evidence" value="ECO:0007669"/>
    <property type="project" value="UniProtKB-KW"/>
</dbReference>
<dbReference type="InterPro" id="IPR002580">
    <property type="entry name" value="Herpes_UL24"/>
</dbReference>
<dbReference type="Pfam" id="PF01646">
    <property type="entry name" value="Herpes_UL24"/>
    <property type="match status" value="1"/>
</dbReference>
<gene>
    <name type="ORF">ORF35</name>
</gene>
<proteinExistence type="evidence at transcript level"/>
<feature type="chain" id="PRO_0000385156" description="Protein UL24 homolog">
    <location>
        <begin position="1"/>
        <end position="258"/>
    </location>
</feature>
<reference key="1">
    <citation type="journal article" date="2002" name="J. Virol.">
        <title>Comparison of the complete DNA sequences of the Oka varicella vaccine and its parental virus.</title>
        <authorList>
            <person name="Gomi Y."/>
            <person name="Sunamachi H."/>
            <person name="Mori Y."/>
            <person name="Nagaike K."/>
            <person name="Takahashi M."/>
            <person name="Yamanishi K."/>
        </authorList>
    </citation>
    <scope>NUCLEOTIDE SEQUENCE [LARGE SCALE GENOMIC DNA]</scope>
    <source>
        <strain>Isolate Human/Japan/P-Oka/1970</strain>
        <strain>Oka varicella vaccine Biken (V-Oka-Biken)</strain>
    </source>
</reference>
<reference key="2">
    <citation type="journal article" date="2008" name="J. Virol.">
        <title>Complete DNA sequences of two oka strain varicella-zoster virus genomes.</title>
        <authorList>
            <person name="Tillieux S.L."/>
            <person name="Halsey W.S."/>
            <person name="Thomas E.S."/>
            <person name="Voycik J.J."/>
            <person name="Sathe G.M."/>
            <person name="Vassilev V."/>
        </authorList>
    </citation>
    <scope>NUCLEOTIDE SEQUENCE [LARGE SCALE GENOMIC DNA]</scope>
    <source>
        <strain>Oka varicella vaccine VarilRix (V-Oka-GSK)</strain>
        <strain>Oka varicella vaccine Varivax (V-Oka-Merck)</strain>
    </source>
</reference>
<protein>
    <recommendedName>
        <fullName>Protein UL24 homolog</fullName>
    </recommendedName>
</protein>
<organism>
    <name type="scientific">Varicella-zoster virus (strain Oka vaccine)</name>
    <name type="common">HHV-3</name>
    <name type="synonym">Human herpesvirus 3</name>
    <dbReference type="NCBI Taxonomy" id="341980"/>
    <lineage>
        <taxon>Viruses</taxon>
        <taxon>Duplodnaviria</taxon>
        <taxon>Heunggongvirae</taxon>
        <taxon>Peploviricota</taxon>
        <taxon>Herviviricetes</taxon>
        <taxon>Herpesvirales</taxon>
        <taxon>Orthoherpesviridae</taxon>
        <taxon>Alphaherpesvirinae</taxon>
        <taxon>Varicellovirus</taxon>
        <taxon>Varicellovirus humanalpha3</taxon>
        <taxon>Human herpesvirus 3</taxon>
    </lineage>
</organism>